<comment type="function">
    <text evidence="1">Cell wall formation. Catalyzes the addition of glutamate to the nucleotide precursor UDP-N-acetylmuramoyl-L-alanine (UMA).</text>
</comment>
<comment type="catalytic activity">
    <reaction evidence="1">
        <text>UDP-N-acetyl-alpha-D-muramoyl-L-alanine + D-glutamate + ATP = UDP-N-acetyl-alpha-D-muramoyl-L-alanyl-D-glutamate + ADP + phosphate + H(+)</text>
        <dbReference type="Rhea" id="RHEA:16429"/>
        <dbReference type="ChEBI" id="CHEBI:15378"/>
        <dbReference type="ChEBI" id="CHEBI:29986"/>
        <dbReference type="ChEBI" id="CHEBI:30616"/>
        <dbReference type="ChEBI" id="CHEBI:43474"/>
        <dbReference type="ChEBI" id="CHEBI:83898"/>
        <dbReference type="ChEBI" id="CHEBI:83900"/>
        <dbReference type="ChEBI" id="CHEBI:456216"/>
        <dbReference type="EC" id="6.3.2.9"/>
    </reaction>
</comment>
<comment type="pathway">
    <text evidence="1">Cell wall biogenesis; peptidoglycan biosynthesis.</text>
</comment>
<comment type="subcellular location">
    <subcellularLocation>
        <location evidence="1">Cytoplasm</location>
    </subcellularLocation>
</comment>
<comment type="similarity">
    <text evidence="1">Belongs to the MurCDEF family.</text>
</comment>
<feature type="chain" id="PRO_0000109106" description="UDP-N-acetylmuramoylalanine--D-glutamate ligase">
    <location>
        <begin position="1"/>
        <end position="471"/>
    </location>
</feature>
<feature type="binding site" evidence="1">
    <location>
        <begin position="122"/>
        <end position="128"/>
    </location>
    <ligand>
        <name>ATP</name>
        <dbReference type="ChEBI" id="CHEBI:30616"/>
    </ligand>
</feature>
<dbReference type="EC" id="6.3.2.9" evidence="1"/>
<dbReference type="EMBL" id="AL939111">
    <property type="protein sequence ID" value="CAB51995.1"/>
    <property type="molecule type" value="Genomic_DNA"/>
</dbReference>
<dbReference type="PIR" id="T34956">
    <property type="entry name" value="T34956"/>
</dbReference>
<dbReference type="RefSeq" id="NP_626345.1">
    <property type="nucleotide sequence ID" value="NC_003888.3"/>
</dbReference>
<dbReference type="RefSeq" id="WP_003976729.1">
    <property type="nucleotide sequence ID" value="NZ_VNID01000001.1"/>
</dbReference>
<dbReference type="SMR" id="Q9S2W9"/>
<dbReference type="FunCoup" id="Q9S2W9">
    <property type="interactions" value="112"/>
</dbReference>
<dbReference type="STRING" id="100226.gene:17759684"/>
<dbReference type="PaxDb" id="100226-SCO2086"/>
<dbReference type="GeneID" id="91386920"/>
<dbReference type="KEGG" id="sco:SCO2086"/>
<dbReference type="PATRIC" id="fig|100226.15.peg.2119"/>
<dbReference type="eggNOG" id="COG0771">
    <property type="taxonomic scope" value="Bacteria"/>
</dbReference>
<dbReference type="HOGENOM" id="CLU_032540_0_0_11"/>
<dbReference type="InParanoid" id="Q9S2W9"/>
<dbReference type="OrthoDB" id="9809796at2"/>
<dbReference type="PhylomeDB" id="Q9S2W9"/>
<dbReference type="UniPathway" id="UPA00219"/>
<dbReference type="Proteomes" id="UP000001973">
    <property type="component" value="Chromosome"/>
</dbReference>
<dbReference type="GO" id="GO:0005737">
    <property type="term" value="C:cytoplasm"/>
    <property type="evidence" value="ECO:0007669"/>
    <property type="project" value="UniProtKB-SubCell"/>
</dbReference>
<dbReference type="GO" id="GO:0005524">
    <property type="term" value="F:ATP binding"/>
    <property type="evidence" value="ECO:0007669"/>
    <property type="project" value="UniProtKB-UniRule"/>
</dbReference>
<dbReference type="GO" id="GO:0004326">
    <property type="term" value="F:tetrahydrofolylpolyglutamate synthase activity"/>
    <property type="evidence" value="ECO:0007669"/>
    <property type="project" value="InterPro"/>
</dbReference>
<dbReference type="GO" id="GO:0008764">
    <property type="term" value="F:UDP-N-acetylmuramoylalanine-D-glutamate ligase activity"/>
    <property type="evidence" value="ECO:0007669"/>
    <property type="project" value="UniProtKB-UniRule"/>
</dbReference>
<dbReference type="GO" id="GO:0051301">
    <property type="term" value="P:cell division"/>
    <property type="evidence" value="ECO:0007669"/>
    <property type="project" value="UniProtKB-KW"/>
</dbReference>
<dbReference type="GO" id="GO:0071555">
    <property type="term" value="P:cell wall organization"/>
    <property type="evidence" value="ECO:0007669"/>
    <property type="project" value="UniProtKB-KW"/>
</dbReference>
<dbReference type="GO" id="GO:0009252">
    <property type="term" value="P:peptidoglycan biosynthetic process"/>
    <property type="evidence" value="ECO:0007669"/>
    <property type="project" value="UniProtKB-UniRule"/>
</dbReference>
<dbReference type="GO" id="GO:0008360">
    <property type="term" value="P:regulation of cell shape"/>
    <property type="evidence" value="ECO:0007669"/>
    <property type="project" value="UniProtKB-KW"/>
</dbReference>
<dbReference type="CDD" id="cd01983">
    <property type="entry name" value="SIMIBI"/>
    <property type="match status" value="1"/>
</dbReference>
<dbReference type="Gene3D" id="3.90.190.20">
    <property type="entry name" value="Mur ligase, C-terminal domain"/>
    <property type="match status" value="1"/>
</dbReference>
<dbReference type="Gene3D" id="3.40.1190.10">
    <property type="entry name" value="Mur-like, catalytic domain"/>
    <property type="match status" value="1"/>
</dbReference>
<dbReference type="Gene3D" id="3.40.50.720">
    <property type="entry name" value="NAD(P)-binding Rossmann-like Domain"/>
    <property type="match status" value="1"/>
</dbReference>
<dbReference type="HAMAP" id="MF_00639">
    <property type="entry name" value="MurD"/>
    <property type="match status" value="1"/>
</dbReference>
<dbReference type="InterPro" id="IPR018109">
    <property type="entry name" value="Folylpolyglutamate_synth_CS"/>
</dbReference>
<dbReference type="InterPro" id="IPR036565">
    <property type="entry name" value="Mur-like_cat_sf"/>
</dbReference>
<dbReference type="InterPro" id="IPR004101">
    <property type="entry name" value="Mur_ligase_C"/>
</dbReference>
<dbReference type="InterPro" id="IPR036615">
    <property type="entry name" value="Mur_ligase_C_dom_sf"/>
</dbReference>
<dbReference type="InterPro" id="IPR013221">
    <property type="entry name" value="Mur_ligase_cen"/>
</dbReference>
<dbReference type="InterPro" id="IPR005762">
    <property type="entry name" value="MurD"/>
</dbReference>
<dbReference type="NCBIfam" id="TIGR01087">
    <property type="entry name" value="murD"/>
    <property type="match status" value="1"/>
</dbReference>
<dbReference type="PANTHER" id="PTHR43692">
    <property type="entry name" value="UDP-N-ACETYLMURAMOYLALANINE--D-GLUTAMATE LIGASE"/>
    <property type="match status" value="1"/>
</dbReference>
<dbReference type="PANTHER" id="PTHR43692:SF1">
    <property type="entry name" value="UDP-N-ACETYLMURAMOYLALANINE--D-GLUTAMATE LIGASE"/>
    <property type="match status" value="1"/>
</dbReference>
<dbReference type="Pfam" id="PF02875">
    <property type="entry name" value="Mur_ligase_C"/>
    <property type="match status" value="1"/>
</dbReference>
<dbReference type="Pfam" id="PF08245">
    <property type="entry name" value="Mur_ligase_M"/>
    <property type="match status" value="1"/>
</dbReference>
<dbReference type="SUPFAM" id="SSF51984">
    <property type="entry name" value="MurCD N-terminal domain"/>
    <property type="match status" value="1"/>
</dbReference>
<dbReference type="SUPFAM" id="SSF53623">
    <property type="entry name" value="MurD-like peptide ligases, catalytic domain"/>
    <property type="match status" value="1"/>
</dbReference>
<dbReference type="SUPFAM" id="SSF53244">
    <property type="entry name" value="MurD-like peptide ligases, peptide-binding domain"/>
    <property type="match status" value="1"/>
</dbReference>
<protein>
    <recommendedName>
        <fullName evidence="1">UDP-N-acetylmuramoylalanine--D-glutamate ligase</fullName>
        <ecNumber evidence="1">6.3.2.9</ecNumber>
    </recommendedName>
    <alternativeName>
        <fullName evidence="1">D-glutamic acid-adding enzyme</fullName>
    </alternativeName>
    <alternativeName>
        <fullName evidence="1">UDP-N-acetylmuramoyl-L-alanyl-D-glutamate synthetase</fullName>
    </alternativeName>
</protein>
<gene>
    <name evidence="1" type="primary">murD</name>
    <name type="ordered locus">SCO2086</name>
    <name type="ORF">SC4A10.19c</name>
</gene>
<evidence type="ECO:0000255" key="1">
    <source>
        <dbReference type="HAMAP-Rule" id="MF_00639"/>
    </source>
</evidence>
<proteinExistence type="inferred from homology"/>
<name>MURD_STRCO</name>
<accession>Q9S2W9</accession>
<sequence length="471" mass="49143">MPSEFSGKHVTVAGLGVSGVPAAKVLHGLGAQVTVVNDGDDERARTQAAELEPLGVTVRLGDGDTLPEGTELIVTAPGWKPTKPLFTAAGQAGVPVWGDVELAWRLRGLNGRKPAPWLAVTGTNGKTTTVQMLASILKAAGLRTAAVGNIGVSLLDAVTGEQEYDVLAVELSSYQLHWAPSLRAHSAAVLNLAPDHLDWHGSMEAYAADKGRIYEGNHVACVYNVADKATEDLVRAADVEEGCRAIGFTLGTPGPSQLGVVEGLLVDRAFVEDRQKNAQELAEVSDVNPPAPHNIANALAAAGLARAFGVSAAAVRDGLRAFTPDAHRIAHVADVDGVAYVDDSKATNTHATEASLAAYESIVWIAGGLAKGATFDELVAGAAKRLRGAVLIGADRALIREALARHAPEVPVVDLDRTDTGAMLQAVQEARRLARPGDTVLLAPACASMDMFTNYNQRGDAFAQAVRELGA</sequence>
<reference key="1">
    <citation type="journal article" date="2002" name="Nature">
        <title>Complete genome sequence of the model actinomycete Streptomyces coelicolor A3(2).</title>
        <authorList>
            <person name="Bentley S.D."/>
            <person name="Chater K.F."/>
            <person name="Cerdeno-Tarraga A.-M."/>
            <person name="Challis G.L."/>
            <person name="Thomson N.R."/>
            <person name="James K.D."/>
            <person name="Harris D.E."/>
            <person name="Quail M.A."/>
            <person name="Kieser H."/>
            <person name="Harper D."/>
            <person name="Bateman A."/>
            <person name="Brown S."/>
            <person name="Chandra G."/>
            <person name="Chen C.W."/>
            <person name="Collins M."/>
            <person name="Cronin A."/>
            <person name="Fraser A."/>
            <person name="Goble A."/>
            <person name="Hidalgo J."/>
            <person name="Hornsby T."/>
            <person name="Howarth S."/>
            <person name="Huang C.-H."/>
            <person name="Kieser T."/>
            <person name="Larke L."/>
            <person name="Murphy L.D."/>
            <person name="Oliver K."/>
            <person name="O'Neil S."/>
            <person name="Rabbinowitsch E."/>
            <person name="Rajandream M.A."/>
            <person name="Rutherford K.M."/>
            <person name="Rutter S."/>
            <person name="Seeger K."/>
            <person name="Saunders D."/>
            <person name="Sharp S."/>
            <person name="Squares R."/>
            <person name="Squares S."/>
            <person name="Taylor K."/>
            <person name="Warren T."/>
            <person name="Wietzorrek A."/>
            <person name="Woodward J.R."/>
            <person name="Barrell B.G."/>
            <person name="Parkhill J."/>
            <person name="Hopwood D.A."/>
        </authorList>
    </citation>
    <scope>NUCLEOTIDE SEQUENCE [LARGE SCALE GENOMIC DNA]</scope>
    <source>
        <strain>ATCC BAA-471 / A3(2) / M145</strain>
    </source>
</reference>
<organism>
    <name type="scientific">Streptomyces coelicolor (strain ATCC BAA-471 / A3(2) / M145)</name>
    <dbReference type="NCBI Taxonomy" id="100226"/>
    <lineage>
        <taxon>Bacteria</taxon>
        <taxon>Bacillati</taxon>
        <taxon>Actinomycetota</taxon>
        <taxon>Actinomycetes</taxon>
        <taxon>Kitasatosporales</taxon>
        <taxon>Streptomycetaceae</taxon>
        <taxon>Streptomyces</taxon>
        <taxon>Streptomyces albidoflavus group</taxon>
    </lineage>
</organism>
<keyword id="KW-0067">ATP-binding</keyword>
<keyword id="KW-0131">Cell cycle</keyword>
<keyword id="KW-0132">Cell division</keyword>
<keyword id="KW-0133">Cell shape</keyword>
<keyword id="KW-0961">Cell wall biogenesis/degradation</keyword>
<keyword id="KW-0963">Cytoplasm</keyword>
<keyword id="KW-0436">Ligase</keyword>
<keyword id="KW-0547">Nucleotide-binding</keyword>
<keyword id="KW-0573">Peptidoglycan synthesis</keyword>
<keyword id="KW-1185">Reference proteome</keyword>